<evidence type="ECO:0000255" key="1">
    <source>
        <dbReference type="HAMAP-Rule" id="MF_01390"/>
    </source>
</evidence>
<accession>Q9MSS0</accession>
<protein>
    <recommendedName>
        <fullName evidence="1">Maturase K</fullName>
    </recommendedName>
    <alternativeName>
        <fullName evidence="1">Intron maturase</fullName>
    </alternativeName>
</protein>
<feature type="chain" id="PRO_0000143737" description="Maturase K">
    <location>
        <begin position="1"/>
        <end position="509"/>
    </location>
</feature>
<gene>
    <name evidence="1" type="primary">matK</name>
</gene>
<sequence length="509" mass="60995">MDEFXXNSNKNRXWQQFFXYPLFFREDLXAIXHDHHLDRFGSSEPKEIXVXNFXSFLTVKRSIRRICKQNKSISLFGNSDSNKLIEYNKNFSFKSMLEGFTIVLEVSIAMRSKHFIKGMDGWNSLRSIHCIFPFMEDKLPHSNYISDIRVPYSIHPEILVRIFRRWIRDVPSLHLLRSILHEWKNSFSRENLEKVLITQRENTRFSLFLWNSYVYECESFLIPLIKRFFNSQSLLYGSFPDRTHFEKKIKDIVIFPLHKISTKKIWLLKDSFIHYVRYGERSLIALKGTHLQVKKCRYHLFHFWQYFFHLWFQPYRICSLELSKTSFSFLGFFIHVKMRPLVVRAKMLDDLFITDLITNELNPIAPIRSILFSLAKEKFCDISGWPISKLSWTSLSDDDIXDRFDRIWINLFHYYSGSINQDGLYHIKYILLLSCAKTLACKHKSTIRVVREQLGSELFTKSFSKEREFISSSFSKTRSQRERIWNSEISQRNPLXXLWQKMENKQIEN</sequence>
<geneLocation type="chloroplast"/>
<reference key="1">
    <citation type="journal article" date="2000" name="Am. J. Bot.">
        <title>Relationships within Cupressaceae sensu lato: a combined morphological and molecular approach.</title>
        <authorList>
            <person name="Gadek P.A."/>
            <person name="Alpers D.L."/>
            <person name="Heslewood M.M."/>
            <person name="Quinn C.J."/>
        </authorList>
    </citation>
    <scope>NUCLEOTIDE SEQUENCE [GENOMIC DNA]</scope>
</reference>
<keyword id="KW-0150">Chloroplast</keyword>
<keyword id="KW-0507">mRNA processing</keyword>
<keyword id="KW-0934">Plastid</keyword>
<keyword id="KW-0694">RNA-binding</keyword>
<keyword id="KW-0819">tRNA processing</keyword>
<comment type="function">
    <text evidence="1">Usually encoded in the trnK tRNA gene intron. Probably assists in splicing its own and other chloroplast group II introns.</text>
</comment>
<comment type="subcellular location">
    <subcellularLocation>
        <location>Plastid</location>
        <location>Chloroplast</location>
    </subcellularLocation>
</comment>
<comment type="similarity">
    <text evidence="1">Belongs to the intron maturase 2 family. MatK subfamily.</text>
</comment>
<organism>
    <name type="scientific">Thujopsis dolabrata</name>
    <name type="common">Hiba arborvitae</name>
    <name type="synonym">Platycladus dolabrata</name>
    <dbReference type="NCBI Taxonomy" id="13727"/>
    <lineage>
        <taxon>Eukaryota</taxon>
        <taxon>Viridiplantae</taxon>
        <taxon>Streptophyta</taxon>
        <taxon>Embryophyta</taxon>
        <taxon>Tracheophyta</taxon>
        <taxon>Spermatophyta</taxon>
        <taxon>Pinopsida</taxon>
        <taxon>Pinidae</taxon>
        <taxon>Conifers II</taxon>
        <taxon>Cupressales</taxon>
        <taxon>Cupressaceae</taxon>
        <taxon>Thujopsis</taxon>
    </lineage>
</organism>
<dbReference type="EMBL" id="AF152217">
    <property type="protein sequence ID" value="AAF25770.1"/>
    <property type="molecule type" value="Genomic_DNA"/>
</dbReference>
<dbReference type="GO" id="GO:0009507">
    <property type="term" value="C:chloroplast"/>
    <property type="evidence" value="ECO:0007669"/>
    <property type="project" value="UniProtKB-SubCell"/>
</dbReference>
<dbReference type="GO" id="GO:0003723">
    <property type="term" value="F:RNA binding"/>
    <property type="evidence" value="ECO:0007669"/>
    <property type="project" value="UniProtKB-KW"/>
</dbReference>
<dbReference type="GO" id="GO:0006397">
    <property type="term" value="P:mRNA processing"/>
    <property type="evidence" value="ECO:0007669"/>
    <property type="project" value="UniProtKB-KW"/>
</dbReference>
<dbReference type="GO" id="GO:0008380">
    <property type="term" value="P:RNA splicing"/>
    <property type="evidence" value="ECO:0007669"/>
    <property type="project" value="UniProtKB-UniRule"/>
</dbReference>
<dbReference type="GO" id="GO:0008033">
    <property type="term" value="P:tRNA processing"/>
    <property type="evidence" value="ECO:0007669"/>
    <property type="project" value="UniProtKB-KW"/>
</dbReference>
<dbReference type="HAMAP" id="MF_01390">
    <property type="entry name" value="MatK"/>
    <property type="match status" value="1"/>
</dbReference>
<dbReference type="InterPro" id="IPR024937">
    <property type="entry name" value="Domain_X"/>
</dbReference>
<dbReference type="InterPro" id="IPR002866">
    <property type="entry name" value="Maturase_MatK"/>
</dbReference>
<dbReference type="InterPro" id="IPR024942">
    <property type="entry name" value="Maturase_MatK_N"/>
</dbReference>
<dbReference type="PANTHER" id="PTHR34811">
    <property type="entry name" value="MATURASE K"/>
    <property type="match status" value="1"/>
</dbReference>
<dbReference type="PANTHER" id="PTHR34811:SF1">
    <property type="entry name" value="MATURASE K"/>
    <property type="match status" value="1"/>
</dbReference>
<dbReference type="Pfam" id="PF01348">
    <property type="entry name" value="Intron_maturas2"/>
    <property type="match status" value="1"/>
</dbReference>
<dbReference type="Pfam" id="PF01824">
    <property type="entry name" value="MatK_N"/>
    <property type="match status" value="1"/>
</dbReference>
<name>MATK_THUDO</name>
<proteinExistence type="inferred from homology"/>